<keyword id="KW-0963">Cytoplasm</keyword>
<keyword id="KW-0256">Endoplasmic reticulum</keyword>
<keyword id="KW-0472">Membrane</keyword>
<keyword id="KW-1185">Reference proteome</keyword>
<keyword id="KW-0712">Selenocysteine</keyword>
<keyword id="KW-0812">Transmembrane</keyword>
<keyword id="KW-1133">Transmembrane helix</keyword>
<protein>
    <recommendedName>
        <fullName>Selenoprotein S</fullName>
        <shortName>SelS</shortName>
    </recommendedName>
    <alternativeName>
        <fullName>VCP-interacting membrane protein</fullName>
    </alternativeName>
</protein>
<reference key="1">
    <citation type="submission" date="2006-10" db="EMBL/GenBank/DDBJ databases">
        <authorList>
            <consortium name="Sanger Xenopus tropicalis EST/cDNA project"/>
        </authorList>
    </citation>
    <scope>NUCLEOTIDE SEQUENCE [LARGE SCALE MRNA]</scope>
    <source>
        <tissue>Neurula</tissue>
    </source>
</reference>
<reference key="2">
    <citation type="submission" date="2004-12" db="EMBL/GenBank/DDBJ databases">
        <authorList>
            <consortium name="NIH - Xenopus Gene Collection (XGC) project"/>
        </authorList>
    </citation>
    <scope>NUCLEOTIDE SEQUENCE [LARGE SCALE MRNA]</scope>
</reference>
<sequence length="189" mass="21160">MELGNQPGPGNRPEIELEWYQYLQNTVGVVLSSYGWYILLGCILIYLLIQKLPQNFTRAGTSNHSTVTDPDEIVRRQEAVTAARLRMQEELNAQAELYKQKQVQLQEEKRQRNIETWDRMKEGKSSKVACRLGQEPSPSTSTSAATKPKQEKQERKTLRGSGYNPLTGDGGGTCAWRPGRRGPSSGGUG</sequence>
<feature type="chain" id="PRO_0000318654" description="Selenoprotein S">
    <location>
        <begin position="1"/>
        <end position="189"/>
    </location>
</feature>
<feature type="transmembrane region" description="Helical" evidence="2">
    <location>
        <begin position="29"/>
        <end position="49"/>
    </location>
</feature>
<feature type="region of interest" description="Disordered" evidence="3">
    <location>
        <begin position="114"/>
        <end position="189"/>
    </location>
</feature>
<feature type="compositionally biased region" description="Basic and acidic residues" evidence="3">
    <location>
        <begin position="114"/>
        <end position="125"/>
    </location>
</feature>
<feature type="compositionally biased region" description="Low complexity" evidence="3">
    <location>
        <begin position="136"/>
        <end position="147"/>
    </location>
</feature>
<feature type="compositionally biased region" description="Basic and acidic residues" evidence="3">
    <location>
        <begin position="148"/>
        <end position="157"/>
    </location>
</feature>
<feature type="non-standard amino acid" description="Selenocysteine" evidence="1">
    <location>
        <position position="188"/>
    </location>
</feature>
<evidence type="ECO:0000250" key="1"/>
<evidence type="ECO:0000255" key="2"/>
<evidence type="ECO:0000256" key="3">
    <source>
        <dbReference type="SAM" id="MobiDB-lite"/>
    </source>
</evidence>
<evidence type="ECO:0000305" key="4"/>
<dbReference type="EMBL" id="CR760118">
    <property type="protein sequence ID" value="CAJ83287.1"/>
    <property type="status" value="ALT_SEQ"/>
    <property type="molecule type" value="mRNA"/>
</dbReference>
<dbReference type="EMBL" id="BC088768">
    <property type="protein sequence ID" value="AAH88768.1"/>
    <property type="status" value="ALT_SEQ"/>
    <property type="molecule type" value="mRNA"/>
</dbReference>
<dbReference type="RefSeq" id="NP_001011476.2">
    <property type="nucleotide sequence ID" value="NM_001011476.2"/>
</dbReference>
<dbReference type="FunCoup" id="Q5I030">
    <property type="interactions" value="381"/>
</dbReference>
<dbReference type="STRING" id="8364.ENSXETP00000001095"/>
<dbReference type="GeneID" id="496967"/>
<dbReference type="KEGG" id="xtr:496967"/>
<dbReference type="AGR" id="Xenbase:XB-GENE-1007235"/>
<dbReference type="CTD" id="55829"/>
<dbReference type="Xenbase" id="XB-GENE-1007235">
    <property type="gene designation" value="selenos"/>
</dbReference>
<dbReference type="InParanoid" id="Q5I030"/>
<dbReference type="OMA" id="KIAMWEN"/>
<dbReference type="OrthoDB" id="75792at2759"/>
<dbReference type="Proteomes" id="UP000008143">
    <property type="component" value="Chromosome 3"/>
</dbReference>
<dbReference type="Bgee" id="ENSXETG00000027997">
    <property type="expression patterns" value="Expressed in liver and 14 other cell types or tissues"/>
</dbReference>
<dbReference type="GO" id="GO:0005881">
    <property type="term" value="C:cytoplasmic microtubule"/>
    <property type="evidence" value="ECO:0000250"/>
    <property type="project" value="UniProtKB"/>
</dbReference>
<dbReference type="GO" id="GO:0005789">
    <property type="term" value="C:endoplasmic reticulum membrane"/>
    <property type="evidence" value="ECO:0007669"/>
    <property type="project" value="UniProtKB-SubCell"/>
</dbReference>
<dbReference type="GO" id="GO:0006886">
    <property type="term" value="P:intracellular protein transport"/>
    <property type="evidence" value="ECO:0007669"/>
    <property type="project" value="InterPro"/>
</dbReference>
<dbReference type="Gene3D" id="6.10.250.2950">
    <property type="match status" value="1"/>
</dbReference>
<dbReference type="InterPro" id="IPR009703">
    <property type="entry name" value="Selenoprotein_S"/>
</dbReference>
<dbReference type="PANTHER" id="PTHR28621">
    <property type="entry name" value="SELENOPROTEIN S"/>
    <property type="match status" value="1"/>
</dbReference>
<dbReference type="PANTHER" id="PTHR28621:SF1">
    <property type="entry name" value="SELENOPROTEIN S"/>
    <property type="match status" value="1"/>
</dbReference>
<dbReference type="Pfam" id="PF06936">
    <property type="entry name" value="Selenoprotein_S"/>
    <property type="match status" value="1"/>
</dbReference>
<proteinExistence type="evidence at transcript level"/>
<comment type="function">
    <text evidence="1">Involved in the degradation process of misfolded endoplasmic reticulum (ER) luminal proteins. Participates in the transfer of misfolded proteins from the ER to the cytosol, where they are destroyed by the proteasome in a ubiquitin-dependent manner (By similarity).</text>
</comment>
<comment type="subcellular location">
    <subcellularLocation>
        <location evidence="1">Endoplasmic reticulum membrane</location>
        <topology evidence="1">Single-pass membrane protein</topology>
    </subcellularLocation>
    <subcellularLocation>
        <location evidence="1">Cytoplasm</location>
    </subcellularLocation>
</comment>
<comment type="similarity">
    <text evidence="4">Belongs to the selenoprotein S family.</text>
</comment>
<comment type="sequence caution" evidence="4">
    <conflict type="erroneous termination">
        <sequence resource="EMBL-CDS" id="AAH88768"/>
    </conflict>
    <text>Truncated C-terminus.</text>
</comment>
<comment type="sequence caution" evidence="4">
    <conflict type="erroneous termination">
        <sequence resource="EMBL-CDS" id="CAJ83287"/>
    </conflict>
    <text>Truncated C-terminus.</text>
</comment>
<name>SELS_XENTR</name>
<accession>Q5I030</accession>
<gene>
    <name type="primary">vimp</name>
    <name type="synonym">sels</name>
    <name type="ORF">TNeu072i15.1</name>
</gene>
<organism>
    <name type="scientific">Xenopus tropicalis</name>
    <name type="common">Western clawed frog</name>
    <name type="synonym">Silurana tropicalis</name>
    <dbReference type="NCBI Taxonomy" id="8364"/>
    <lineage>
        <taxon>Eukaryota</taxon>
        <taxon>Metazoa</taxon>
        <taxon>Chordata</taxon>
        <taxon>Craniata</taxon>
        <taxon>Vertebrata</taxon>
        <taxon>Euteleostomi</taxon>
        <taxon>Amphibia</taxon>
        <taxon>Batrachia</taxon>
        <taxon>Anura</taxon>
        <taxon>Pipoidea</taxon>
        <taxon>Pipidae</taxon>
        <taxon>Xenopodinae</taxon>
        <taxon>Xenopus</taxon>
        <taxon>Silurana</taxon>
    </lineage>
</organism>